<sequence>MYTSEERCNQRTQKRKIYNVCPQKGKKIFIHVHAITQIDGHIYQCLECKQNFCENLALIMCERTHTGEKPYKCDMCEKTFVQSSDLISHQRIHNYEKPYKCSKCEKSFWHHLALSGHQRTHAGKKFYTCDICGKNFGQSSDLLVHQRSHTGEKPYLCSECDKCFSRSTNLIRHRRTHTGEKPFKCLECEKAFSGKSDLISHQRTHTGERPYKCNKCEKSYRHRSAFIVHKRVHTGEKPYKCGACEKCFGQKSDLIVHQRVHTGEKPYKCLECMRSFTRSANLIRHQATHTHTFKCLEYEKSFNCSSDLIVHQRIHMEEKPHQWSTCESGFLLGMDFVAQQKMRTQTEELHYKYTVCDKSFHQSSALLQHQTVHTGEKPFICNVSEKGLELSPPHASEASQMS</sequence>
<accession>Q4R7X8</accession>
<feature type="chain" id="PRO_0000047530" description="Zinc finger protein 322">
    <location>
        <begin position="1"/>
        <end position="402"/>
    </location>
</feature>
<feature type="zinc finger region" description="C2H2-type 1; atypical" evidence="3">
    <location>
        <begin position="43"/>
        <end position="65"/>
    </location>
</feature>
<feature type="zinc finger region" description="C2H2-type 2" evidence="3">
    <location>
        <begin position="71"/>
        <end position="93"/>
    </location>
</feature>
<feature type="zinc finger region" description="C2H2-type 3" evidence="3">
    <location>
        <begin position="99"/>
        <end position="121"/>
    </location>
</feature>
<feature type="zinc finger region" description="C2H2-type 4" evidence="3">
    <location>
        <begin position="127"/>
        <end position="149"/>
    </location>
</feature>
<feature type="zinc finger region" description="C2H2-type 5" evidence="3">
    <location>
        <begin position="155"/>
        <end position="177"/>
    </location>
</feature>
<feature type="zinc finger region" description="C2H2-type 6" evidence="3">
    <location>
        <begin position="183"/>
        <end position="205"/>
    </location>
</feature>
<feature type="zinc finger region" description="C2H2-type 7" evidence="3">
    <location>
        <begin position="211"/>
        <end position="233"/>
    </location>
</feature>
<feature type="zinc finger region" description="C2H2-type 8" evidence="3">
    <location>
        <begin position="239"/>
        <end position="261"/>
    </location>
</feature>
<feature type="zinc finger region" description="C2H2-type 9" evidence="3">
    <location>
        <begin position="267"/>
        <end position="289"/>
    </location>
</feature>
<feature type="zinc finger region" description="C2H2-type 10; degenerate" evidence="3">
    <location>
        <begin position="293"/>
        <end position="315"/>
    </location>
</feature>
<feature type="zinc finger region" description="C2H2-type 11; degenerate" evidence="3">
    <location>
        <begin position="351"/>
        <end position="373"/>
    </location>
</feature>
<feature type="modified residue" description="Phosphoserine" evidence="1">
    <location>
        <position position="391"/>
    </location>
</feature>
<protein>
    <recommendedName>
        <fullName>Zinc finger protein 322</fullName>
    </recommendedName>
    <alternativeName>
        <fullName>Zinc finger protein 322A</fullName>
    </alternativeName>
</protein>
<comment type="function">
    <text evidence="2">Transcriptional activator. Important for maintenance of pluripotency in embryonic stem cells. Binds directly to the POU5F1 distal enhancer and the NANOG proximal promoter, and enhances expression of both genes. Can also bind to numerous other gene promoters and regulates expression of many other pluripotency factors, either directly or indirectly. Promotes inhibition of MAPK signaling during embryonic stem cell differentiation.</text>
</comment>
<comment type="subunit">
    <text evidence="2">Interacts with POU5F1.</text>
</comment>
<comment type="subcellular location">
    <subcellularLocation>
        <location evidence="2">Cytoplasm</location>
    </subcellularLocation>
    <subcellularLocation>
        <location evidence="2">Nucleus</location>
    </subcellularLocation>
    <text evidence="2">Mainly found in the nucleus.</text>
</comment>
<comment type="miscellaneous">
    <text evidence="2">Significantly enhances POU5F1/OCT4-SOX2-KLF4-MYC (OSKM) mediated reprogramming of mouse embryonic fibroblasts into induced pluripotent stem cells, and can also substitute for SOX2 in this process.</text>
</comment>
<comment type="similarity">
    <text evidence="4">Belongs to the krueppel C2H2-type zinc-finger protein family.</text>
</comment>
<evidence type="ECO:0000250" key="1">
    <source>
        <dbReference type="UniProtKB" id="Q6U7Q0"/>
    </source>
</evidence>
<evidence type="ECO:0000250" key="2">
    <source>
        <dbReference type="UniProtKB" id="Q8BZ89"/>
    </source>
</evidence>
<evidence type="ECO:0000255" key="3">
    <source>
        <dbReference type="PROSITE-ProRule" id="PRU00042"/>
    </source>
</evidence>
<evidence type="ECO:0000305" key="4"/>
<keyword id="KW-0010">Activator</keyword>
<keyword id="KW-0963">Cytoplasm</keyword>
<keyword id="KW-0238">DNA-binding</keyword>
<keyword id="KW-0479">Metal-binding</keyword>
<keyword id="KW-0539">Nucleus</keyword>
<keyword id="KW-0597">Phosphoprotein</keyword>
<keyword id="KW-1185">Reference proteome</keyword>
<keyword id="KW-0677">Repeat</keyword>
<keyword id="KW-0804">Transcription</keyword>
<keyword id="KW-0805">Transcription regulation</keyword>
<keyword id="KW-0862">Zinc</keyword>
<keyword id="KW-0863">Zinc-finger</keyword>
<proteinExistence type="evidence at transcript level"/>
<reference key="1">
    <citation type="submission" date="2004-03" db="EMBL/GenBank/DDBJ databases">
        <title>DNA sequences of macaque genes expressed in brain or testis and its evolutionary implications.</title>
        <authorList>
            <consortium name="International consortium for macaque cDNA sequencing and analysis"/>
        </authorList>
    </citation>
    <scope>NUCLEOTIDE SEQUENCE [LARGE SCALE MRNA]</scope>
    <source>
        <tissue>Testis</tissue>
    </source>
</reference>
<organism>
    <name type="scientific">Macaca fascicularis</name>
    <name type="common">Crab-eating macaque</name>
    <name type="synonym">Cynomolgus monkey</name>
    <dbReference type="NCBI Taxonomy" id="9541"/>
    <lineage>
        <taxon>Eukaryota</taxon>
        <taxon>Metazoa</taxon>
        <taxon>Chordata</taxon>
        <taxon>Craniata</taxon>
        <taxon>Vertebrata</taxon>
        <taxon>Euteleostomi</taxon>
        <taxon>Mammalia</taxon>
        <taxon>Eutheria</taxon>
        <taxon>Euarchontoglires</taxon>
        <taxon>Primates</taxon>
        <taxon>Haplorrhini</taxon>
        <taxon>Catarrhini</taxon>
        <taxon>Cercopithecidae</taxon>
        <taxon>Cercopithecinae</taxon>
        <taxon>Macaca</taxon>
    </lineage>
</organism>
<gene>
    <name type="primary">ZNF322</name>
    <name type="synonym">ZNF322A</name>
    <name type="ORF">QtsA-14134</name>
</gene>
<dbReference type="EMBL" id="AB168683">
    <property type="protein sequence ID" value="BAE00794.1"/>
    <property type="molecule type" value="mRNA"/>
</dbReference>
<dbReference type="RefSeq" id="NP_001274556.1">
    <property type="nucleotide sequence ID" value="NM_001287627.1"/>
</dbReference>
<dbReference type="RefSeq" id="XP_005553859.1">
    <property type="nucleotide sequence ID" value="XM_005553802.2"/>
</dbReference>
<dbReference type="RefSeq" id="XP_005553860.1">
    <property type="nucleotide sequence ID" value="XM_005553803.2"/>
</dbReference>
<dbReference type="RefSeq" id="XP_015304337.1">
    <property type="nucleotide sequence ID" value="XM_015448851.1"/>
</dbReference>
<dbReference type="SMR" id="Q4R7X8"/>
<dbReference type="STRING" id="9541.ENSMFAP00000011634"/>
<dbReference type="Ensembl" id="ENSMFAT00000050955.2">
    <property type="protein sequence ID" value="ENSMFAP00000011634.1"/>
    <property type="gene ID" value="ENSMFAG00000017291.2"/>
</dbReference>
<dbReference type="Ensembl" id="ENSMFAT00000089863.1">
    <property type="protein sequence ID" value="ENSMFAP00000046520.1"/>
    <property type="gene ID" value="ENSMFAG00000017291.2"/>
</dbReference>
<dbReference type="Ensembl" id="ENSMFAT00000095767.1">
    <property type="protein sequence ID" value="ENSMFAP00000055327.1"/>
    <property type="gene ID" value="ENSMFAG00000017291.2"/>
</dbReference>
<dbReference type="GeneID" id="102146172"/>
<dbReference type="KEGG" id="mcf:102146172"/>
<dbReference type="CTD" id="79692"/>
<dbReference type="VEuPathDB" id="HostDB:ENSMFAG00000017291"/>
<dbReference type="eggNOG" id="KOG1721">
    <property type="taxonomic scope" value="Eukaryota"/>
</dbReference>
<dbReference type="GeneTree" id="ENSGT00940000162956"/>
<dbReference type="OMA" id="CNVSDKG"/>
<dbReference type="Proteomes" id="UP000233100">
    <property type="component" value="Chromosome 4"/>
</dbReference>
<dbReference type="Bgee" id="ENSMFAG00000017291">
    <property type="expression patterns" value="Expressed in pituitary gland and 13 other cell types or tissues"/>
</dbReference>
<dbReference type="GO" id="GO:0005813">
    <property type="term" value="C:centrosome"/>
    <property type="evidence" value="ECO:0007669"/>
    <property type="project" value="Ensembl"/>
</dbReference>
<dbReference type="GO" id="GO:0005829">
    <property type="term" value="C:cytosol"/>
    <property type="evidence" value="ECO:0007669"/>
    <property type="project" value="Ensembl"/>
</dbReference>
<dbReference type="GO" id="GO:0005654">
    <property type="term" value="C:nucleoplasm"/>
    <property type="evidence" value="ECO:0007669"/>
    <property type="project" value="Ensembl"/>
</dbReference>
<dbReference type="GO" id="GO:0003677">
    <property type="term" value="F:DNA binding"/>
    <property type="evidence" value="ECO:0007669"/>
    <property type="project" value="UniProtKB-KW"/>
</dbReference>
<dbReference type="GO" id="GO:0008270">
    <property type="term" value="F:zinc ion binding"/>
    <property type="evidence" value="ECO:0007669"/>
    <property type="project" value="UniProtKB-KW"/>
</dbReference>
<dbReference type="FunFam" id="3.30.160.60:FF:002988">
    <property type="entry name" value="RCG45242, isoform CRA_a"/>
    <property type="match status" value="1"/>
</dbReference>
<dbReference type="FunFam" id="3.30.160.60:FF:000540">
    <property type="entry name" value="zinc finger protein 263 isoform X1"/>
    <property type="match status" value="1"/>
</dbReference>
<dbReference type="FunFam" id="3.30.160.60:FF:002323">
    <property type="entry name" value="Zinc finger protein 322"/>
    <property type="match status" value="1"/>
</dbReference>
<dbReference type="FunFam" id="3.30.160.60:FF:002339">
    <property type="entry name" value="Zinc finger protein 322"/>
    <property type="match status" value="1"/>
</dbReference>
<dbReference type="FunFam" id="3.30.160.60:FF:003317">
    <property type="entry name" value="Zinc finger protein 322"/>
    <property type="match status" value="1"/>
</dbReference>
<dbReference type="FunFam" id="3.30.160.60:FF:002343">
    <property type="entry name" value="Zinc finger protein 33A"/>
    <property type="match status" value="2"/>
</dbReference>
<dbReference type="FunFam" id="3.30.160.60:FF:000848">
    <property type="entry name" value="Zinc finger protein 35"/>
    <property type="match status" value="2"/>
</dbReference>
<dbReference type="FunFam" id="3.30.160.60:FF:001468">
    <property type="entry name" value="Zinc finger protein 672"/>
    <property type="match status" value="1"/>
</dbReference>
<dbReference type="Gene3D" id="3.30.160.60">
    <property type="entry name" value="Classic Zinc Finger"/>
    <property type="match status" value="11"/>
</dbReference>
<dbReference type="InterPro" id="IPR050758">
    <property type="entry name" value="Znf_C2H2-type"/>
</dbReference>
<dbReference type="InterPro" id="IPR036236">
    <property type="entry name" value="Znf_C2H2_sf"/>
</dbReference>
<dbReference type="InterPro" id="IPR013087">
    <property type="entry name" value="Znf_C2H2_type"/>
</dbReference>
<dbReference type="PANTHER" id="PTHR23234:SF10">
    <property type="entry name" value="RIKEN CDNA 6720489N17 GENE-RELATED"/>
    <property type="match status" value="1"/>
</dbReference>
<dbReference type="PANTHER" id="PTHR23234">
    <property type="entry name" value="ZNF44 PROTEIN"/>
    <property type="match status" value="1"/>
</dbReference>
<dbReference type="Pfam" id="PF00096">
    <property type="entry name" value="zf-C2H2"/>
    <property type="match status" value="7"/>
</dbReference>
<dbReference type="SMART" id="SM00355">
    <property type="entry name" value="ZnF_C2H2"/>
    <property type="match status" value="11"/>
</dbReference>
<dbReference type="SUPFAM" id="SSF57667">
    <property type="entry name" value="beta-beta-alpha zinc fingers"/>
    <property type="match status" value="7"/>
</dbReference>
<dbReference type="PROSITE" id="PS00028">
    <property type="entry name" value="ZINC_FINGER_C2H2_1"/>
    <property type="match status" value="8"/>
</dbReference>
<dbReference type="PROSITE" id="PS50157">
    <property type="entry name" value="ZINC_FINGER_C2H2_2"/>
    <property type="match status" value="11"/>
</dbReference>
<name>ZN322_MACFA</name>